<organism>
    <name type="scientific">Polaromonas sp. (strain JS666 / ATCC BAA-500)</name>
    <dbReference type="NCBI Taxonomy" id="296591"/>
    <lineage>
        <taxon>Bacteria</taxon>
        <taxon>Pseudomonadati</taxon>
        <taxon>Pseudomonadota</taxon>
        <taxon>Betaproteobacteria</taxon>
        <taxon>Burkholderiales</taxon>
        <taxon>Comamonadaceae</taxon>
        <taxon>Polaromonas</taxon>
    </lineage>
</organism>
<comment type="function">
    <text evidence="1">Catalyzes the attachment of threonine to tRNA(Thr) in a two-step reaction: L-threonine is first activated by ATP to form Thr-AMP and then transferred to the acceptor end of tRNA(Thr). Also edits incorrectly charged L-seryl-tRNA(Thr).</text>
</comment>
<comment type="catalytic activity">
    <reaction evidence="1">
        <text>tRNA(Thr) + L-threonine + ATP = L-threonyl-tRNA(Thr) + AMP + diphosphate + H(+)</text>
        <dbReference type="Rhea" id="RHEA:24624"/>
        <dbReference type="Rhea" id="RHEA-COMP:9670"/>
        <dbReference type="Rhea" id="RHEA-COMP:9704"/>
        <dbReference type="ChEBI" id="CHEBI:15378"/>
        <dbReference type="ChEBI" id="CHEBI:30616"/>
        <dbReference type="ChEBI" id="CHEBI:33019"/>
        <dbReference type="ChEBI" id="CHEBI:57926"/>
        <dbReference type="ChEBI" id="CHEBI:78442"/>
        <dbReference type="ChEBI" id="CHEBI:78534"/>
        <dbReference type="ChEBI" id="CHEBI:456215"/>
        <dbReference type="EC" id="6.1.1.3"/>
    </reaction>
</comment>
<comment type="cofactor">
    <cofactor evidence="1">
        <name>Zn(2+)</name>
        <dbReference type="ChEBI" id="CHEBI:29105"/>
    </cofactor>
    <text evidence="1">Binds 1 zinc ion per subunit.</text>
</comment>
<comment type="subunit">
    <text evidence="1">Homodimer.</text>
</comment>
<comment type="subcellular location">
    <subcellularLocation>
        <location evidence="1">Cytoplasm</location>
    </subcellularLocation>
</comment>
<comment type="similarity">
    <text evidence="1">Belongs to the class-II aminoacyl-tRNA synthetase family.</text>
</comment>
<reference key="1">
    <citation type="journal article" date="2008" name="Appl. Environ. Microbiol.">
        <title>The genome of Polaromonas sp. strain JS666: insights into the evolution of a hydrocarbon- and xenobiotic-degrading bacterium, and features of relevance to biotechnology.</title>
        <authorList>
            <person name="Mattes T.E."/>
            <person name="Alexander A.K."/>
            <person name="Richardson P.M."/>
            <person name="Munk A.C."/>
            <person name="Han C.S."/>
            <person name="Stothard P."/>
            <person name="Coleman N.V."/>
        </authorList>
    </citation>
    <scope>NUCLEOTIDE SEQUENCE [LARGE SCALE GENOMIC DNA]</scope>
    <source>
        <strain>JS666 / ATCC BAA-500</strain>
    </source>
</reference>
<accession>Q12BR3</accession>
<dbReference type="EC" id="6.1.1.3" evidence="1"/>
<dbReference type="EMBL" id="CP000316">
    <property type="protein sequence ID" value="ABE44029.1"/>
    <property type="molecule type" value="Genomic_DNA"/>
</dbReference>
<dbReference type="RefSeq" id="WP_011483028.1">
    <property type="nucleotide sequence ID" value="NC_007948.1"/>
</dbReference>
<dbReference type="SMR" id="Q12BR3"/>
<dbReference type="STRING" id="296591.Bpro_2102"/>
<dbReference type="KEGG" id="pol:Bpro_2102"/>
<dbReference type="eggNOG" id="COG0441">
    <property type="taxonomic scope" value="Bacteria"/>
</dbReference>
<dbReference type="HOGENOM" id="CLU_008554_0_1_4"/>
<dbReference type="OrthoDB" id="9802304at2"/>
<dbReference type="Proteomes" id="UP000001983">
    <property type="component" value="Chromosome"/>
</dbReference>
<dbReference type="GO" id="GO:0005737">
    <property type="term" value="C:cytoplasm"/>
    <property type="evidence" value="ECO:0007669"/>
    <property type="project" value="UniProtKB-SubCell"/>
</dbReference>
<dbReference type="GO" id="GO:0005524">
    <property type="term" value="F:ATP binding"/>
    <property type="evidence" value="ECO:0007669"/>
    <property type="project" value="UniProtKB-UniRule"/>
</dbReference>
<dbReference type="GO" id="GO:0046872">
    <property type="term" value="F:metal ion binding"/>
    <property type="evidence" value="ECO:0007669"/>
    <property type="project" value="UniProtKB-KW"/>
</dbReference>
<dbReference type="GO" id="GO:0004829">
    <property type="term" value="F:threonine-tRNA ligase activity"/>
    <property type="evidence" value="ECO:0007669"/>
    <property type="project" value="UniProtKB-UniRule"/>
</dbReference>
<dbReference type="GO" id="GO:0000049">
    <property type="term" value="F:tRNA binding"/>
    <property type="evidence" value="ECO:0007669"/>
    <property type="project" value="UniProtKB-KW"/>
</dbReference>
<dbReference type="GO" id="GO:0006435">
    <property type="term" value="P:threonyl-tRNA aminoacylation"/>
    <property type="evidence" value="ECO:0007669"/>
    <property type="project" value="UniProtKB-UniRule"/>
</dbReference>
<dbReference type="CDD" id="cd01667">
    <property type="entry name" value="TGS_ThrRS"/>
    <property type="match status" value="1"/>
</dbReference>
<dbReference type="CDD" id="cd00860">
    <property type="entry name" value="ThrRS_anticodon"/>
    <property type="match status" value="1"/>
</dbReference>
<dbReference type="CDD" id="cd00771">
    <property type="entry name" value="ThrRS_core"/>
    <property type="match status" value="1"/>
</dbReference>
<dbReference type="FunFam" id="3.10.20.30:FF:000005">
    <property type="entry name" value="Threonine--tRNA ligase"/>
    <property type="match status" value="1"/>
</dbReference>
<dbReference type="FunFam" id="3.30.54.20:FF:000002">
    <property type="entry name" value="Threonine--tRNA ligase"/>
    <property type="match status" value="1"/>
</dbReference>
<dbReference type="FunFam" id="3.30.930.10:FF:000002">
    <property type="entry name" value="Threonine--tRNA ligase"/>
    <property type="match status" value="1"/>
</dbReference>
<dbReference type="FunFam" id="3.40.50.800:FF:000001">
    <property type="entry name" value="Threonine--tRNA ligase"/>
    <property type="match status" value="1"/>
</dbReference>
<dbReference type="FunFam" id="3.30.980.10:FF:000005">
    <property type="entry name" value="Threonyl-tRNA synthetase, mitochondrial"/>
    <property type="match status" value="1"/>
</dbReference>
<dbReference type="Gene3D" id="3.10.20.30">
    <property type="match status" value="1"/>
</dbReference>
<dbReference type="Gene3D" id="3.30.54.20">
    <property type="match status" value="1"/>
</dbReference>
<dbReference type="Gene3D" id="3.40.50.800">
    <property type="entry name" value="Anticodon-binding domain"/>
    <property type="match status" value="1"/>
</dbReference>
<dbReference type="Gene3D" id="3.30.930.10">
    <property type="entry name" value="Bira Bifunctional Protein, Domain 2"/>
    <property type="match status" value="1"/>
</dbReference>
<dbReference type="Gene3D" id="3.30.980.10">
    <property type="entry name" value="Threonyl-trna Synthetase, Chain A, domain 2"/>
    <property type="match status" value="1"/>
</dbReference>
<dbReference type="HAMAP" id="MF_00184">
    <property type="entry name" value="Thr_tRNA_synth"/>
    <property type="match status" value="1"/>
</dbReference>
<dbReference type="InterPro" id="IPR002314">
    <property type="entry name" value="aa-tRNA-synt_IIb"/>
</dbReference>
<dbReference type="InterPro" id="IPR006195">
    <property type="entry name" value="aa-tRNA-synth_II"/>
</dbReference>
<dbReference type="InterPro" id="IPR045864">
    <property type="entry name" value="aa-tRNA-synth_II/BPL/LPL"/>
</dbReference>
<dbReference type="InterPro" id="IPR004154">
    <property type="entry name" value="Anticodon-bd"/>
</dbReference>
<dbReference type="InterPro" id="IPR036621">
    <property type="entry name" value="Anticodon-bd_dom_sf"/>
</dbReference>
<dbReference type="InterPro" id="IPR012675">
    <property type="entry name" value="Beta-grasp_dom_sf"/>
</dbReference>
<dbReference type="InterPro" id="IPR004095">
    <property type="entry name" value="TGS"/>
</dbReference>
<dbReference type="InterPro" id="IPR012676">
    <property type="entry name" value="TGS-like"/>
</dbReference>
<dbReference type="InterPro" id="IPR002320">
    <property type="entry name" value="Thr-tRNA-ligase_IIa"/>
</dbReference>
<dbReference type="InterPro" id="IPR018163">
    <property type="entry name" value="Thr/Ala-tRNA-synth_IIc_edit"/>
</dbReference>
<dbReference type="InterPro" id="IPR047246">
    <property type="entry name" value="ThrRS_anticodon"/>
</dbReference>
<dbReference type="InterPro" id="IPR033728">
    <property type="entry name" value="ThrRS_core"/>
</dbReference>
<dbReference type="InterPro" id="IPR012947">
    <property type="entry name" value="tRNA_SAD"/>
</dbReference>
<dbReference type="NCBIfam" id="TIGR00418">
    <property type="entry name" value="thrS"/>
    <property type="match status" value="1"/>
</dbReference>
<dbReference type="PANTHER" id="PTHR11451:SF44">
    <property type="entry name" value="THREONINE--TRNA LIGASE, CHLOROPLASTIC_MITOCHONDRIAL 2"/>
    <property type="match status" value="1"/>
</dbReference>
<dbReference type="PANTHER" id="PTHR11451">
    <property type="entry name" value="THREONINE-TRNA LIGASE"/>
    <property type="match status" value="1"/>
</dbReference>
<dbReference type="Pfam" id="PF03129">
    <property type="entry name" value="HGTP_anticodon"/>
    <property type="match status" value="1"/>
</dbReference>
<dbReference type="Pfam" id="PF02824">
    <property type="entry name" value="TGS"/>
    <property type="match status" value="1"/>
</dbReference>
<dbReference type="Pfam" id="PF00587">
    <property type="entry name" value="tRNA-synt_2b"/>
    <property type="match status" value="1"/>
</dbReference>
<dbReference type="Pfam" id="PF07973">
    <property type="entry name" value="tRNA_SAD"/>
    <property type="match status" value="1"/>
</dbReference>
<dbReference type="PRINTS" id="PR01047">
    <property type="entry name" value="TRNASYNTHTHR"/>
</dbReference>
<dbReference type="SMART" id="SM00863">
    <property type="entry name" value="tRNA_SAD"/>
    <property type="match status" value="1"/>
</dbReference>
<dbReference type="SUPFAM" id="SSF52954">
    <property type="entry name" value="Class II aaRS ABD-related"/>
    <property type="match status" value="1"/>
</dbReference>
<dbReference type="SUPFAM" id="SSF55681">
    <property type="entry name" value="Class II aaRS and biotin synthetases"/>
    <property type="match status" value="1"/>
</dbReference>
<dbReference type="SUPFAM" id="SSF81271">
    <property type="entry name" value="TGS-like"/>
    <property type="match status" value="1"/>
</dbReference>
<dbReference type="SUPFAM" id="SSF55186">
    <property type="entry name" value="ThrRS/AlaRS common domain"/>
    <property type="match status" value="1"/>
</dbReference>
<dbReference type="PROSITE" id="PS50862">
    <property type="entry name" value="AA_TRNA_LIGASE_II"/>
    <property type="match status" value="1"/>
</dbReference>
<dbReference type="PROSITE" id="PS51880">
    <property type="entry name" value="TGS"/>
    <property type="match status" value="1"/>
</dbReference>
<feature type="chain" id="PRO_1000020461" description="Threonine--tRNA ligase">
    <location>
        <begin position="1"/>
        <end position="635"/>
    </location>
</feature>
<feature type="domain" description="TGS" evidence="2">
    <location>
        <begin position="1"/>
        <end position="61"/>
    </location>
</feature>
<feature type="region of interest" description="Catalytic" evidence="1">
    <location>
        <begin position="242"/>
        <end position="533"/>
    </location>
</feature>
<feature type="binding site" evidence="1">
    <location>
        <position position="333"/>
    </location>
    <ligand>
        <name>Zn(2+)</name>
        <dbReference type="ChEBI" id="CHEBI:29105"/>
    </ligand>
</feature>
<feature type="binding site" evidence="1">
    <location>
        <position position="384"/>
    </location>
    <ligand>
        <name>Zn(2+)</name>
        <dbReference type="ChEBI" id="CHEBI:29105"/>
    </ligand>
</feature>
<feature type="binding site" evidence="1">
    <location>
        <position position="510"/>
    </location>
    <ligand>
        <name>Zn(2+)</name>
        <dbReference type="ChEBI" id="CHEBI:29105"/>
    </ligand>
</feature>
<keyword id="KW-0030">Aminoacyl-tRNA synthetase</keyword>
<keyword id="KW-0067">ATP-binding</keyword>
<keyword id="KW-0963">Cytoplasm</keyword>
<keyword id="KW-0436">Ligase</keyword>
<keyword id="KW-0479">Metal-binding</keyword>
<keyword id="KW-0547">Nucleotide-binding</keyword>
<keyword id="KW-0648">Protein biosynthesis</keyword>
<keyword id="KW-1185">Reference proteome</keyword>
<keyword id="KW-0694">RNA-binding</keyword>
<keyword id="KW-0820">tRNA-binding</keyword>
<keyword id="KW-0862">Zinc</keyword>
<sequence>MIQITLPDASKREYPQAVTVAEVAASIGAGLAKAALGGKVDGKVVDTSYLIEKDSALSIITAKDADGLELIRHSTAHLLAYAVKELFSEAQVTIGPVIENGFYYDFAYKRPFTPEDLAAIEKRMTELAAKDEPVTRRVLPRDEAVAHFKSIGEHYKAEIIASIPANEDVSLYREGTFEDLCRGPHVPSTGKLKFFKLMKVAGAYWRGDHRNEMLQRVYGTAWATKDELQQYLTMLEEAEKRDHRKLGKELDLFHIDDHAPGLVFWHPKGWTIWQGVEQYMRKVYQDNGYQEVKGPQVIDKTLWEKTGHWDKYRDNMFTTESEKREYALKPMNCPGHILIFKQGIKSYRDLPLRYGEFGQCHRNEPSGGLHGIMRVRGFTQDDGHIFCTEEQILKECVDYTTLLQKVYTDFGFKNIIYKVATRPDARIGSDESWDKAEQALIESLRASGCEFEISPGEGAFYGPKIEYTLKDAIGRQWQCGTMQVDFSMPERLDAEYVGEDGARHRPVMLHRAIVGSLERFIGILIEEHAGALPTWLAPIQVSVLNITDSQAEYAREVAKTLQNQGLRVNLDLRNEKITYKIREHSLQKLPYILVVGDKEKAAGAVAVRARGNKDLGVMSIEAFAQQIASDIAQKA</sequence>
<proteinExistence type="inferred from homology"/>
<name>SYT_POLSJ</name>
<protein>
    <recommendedName>
        <fullName evidence="1">Threonine--tRNA ligase</fullName>
        <ecNumber evidence="1">6.1.1.3</ecNumber>
    </recommendedName>
    <alternativeName>
        <fullName evidence="1">Threonyl-tRNA synthetase</fullName>
        <shortName evidence="1">ThrRS</shortName>
    </alternativeName>
</protein>
<evidence type="ECO:0000255" key="1">
    <source>
        <dbReference type="HAMAP-Rule" id="MF_00184"/>
    </source>
</evidence>
<evidence type="ECO:0000255" key="2">
    <source>
        <dbReference type="PROSITE-ProRule" id="PRU01228"/>
    </source>
</evidence>
<gene>
    <name evidence="1" type="primary">thrS</name>
    <name type="ordered locus">Bpro_2102</name>
</gene>